<evidence type="ECO:0000269" key="1">
    <source>
    </source>
</evidence>
<evidence type="ECO:0000303" key="2">
    <source>
    </source>
</evidence>
<evidence type="ECO:0000312" key="3">
    <source>
        <dbReference type="EMBL" id="QNV50554.1"/>
    </source>
</evidence>
<protein>
    <recommendedName>
        <fullName evidence="2">Protein YtgA</fullName>
    </recommendedName>
</protein>
<dbReference type="EMBL" id="U00096">
    <property type="protein sequence ID" value="QNV50554.1"/>
    <property type="molecule type" value="Genomic_DNA"/>
</dbReference>
<dbReference type="InParanoid" id="P0DSH8"/>
<dbReference type="BioCyc" id="EcoCyc:MONOMER0-4514"/>
<dbReference type="Proteomes" id="UP000000625">
    <property type="component" value="Chromosome"/>
</dbReference>
<keyword id="KW-1185">Reference proteome</keyword>
<sequence>MSIIILATISTTQENK</sequence>
<name>YTGA_ECOLI</name>
<feature type="chain" id="PRO_0000447171" description="Protein YtgA">
    <location>
        <begin position="1"/>
        <end position="16"/>
    </location>
</feature>
<gene>
    <name evidence="2" type="primary">ytgA</name>
    <name evidence="3" type="ordered locus">b4800</name>
</gene>
<comment type="induction">
    <text evidence="1">Expressed equally in exponential and stationary phase in rich medium (at protein level).</text>
</comment>
<proteinExistence type="evidence at protein level"/>
<reference key="1">
    <citation type="journal article" date="1997" name="Science">
        <title>The complete genome sequence of Escherichia coli K-12.</title>
        <authorList>
            <person name="Blattner F.R."/>
            <person name="Plunkett G. III"/>
            <person name="Bloch C.A."/>
            <person name="Perna N.T."/>
            <person name="Burland V."/>
            <person name="Riley M."/>
            <person name="Collado-Vides J."/>
            <person name="Glasner J.D."/>
            <person name="Rode C.K."/>
            <person name="Mayhew G.F."/>
            <person name="Gregor J."/>
            <person name="Davis N.W."/>
            <person name="Kirkpatrick H.A."/>
            <person name="Goeden M.A."/>
            <person name="Rose D.J."/>
            <person name="Mau B."/>
            <person name="Shao Y."/>
        </authorList>
    </citation>
    <scope>NUCLEOTIDE SEQUENCE [LARGE SCALE GENOMIC DNA]</scope>
    <source>
        <strain>K12 / MG1655 / ATCC 47076</strain>
    </source>
</reference>
<reference key="2">
    <citation type="journal article" date="2019" name="MBio">
        <title>Identifying small proteins by ribosome profiling with stalled initiation complexes.</title>
        <authorList>
            <person name="Weaver J."/>
            <person name="Mohammad F."/>
            <person name="Buskirk A.R."/>
            <person name="Storz G."/>
        </authorList>
    </citation>
    <scope>IDENTIFICATION</scope>
    <scope>INDUCTION</scope>
    <source>
        <strain>K12 / MG1655 / ATCC 47076</strain>
    </source>
</reference>
<accession>P0DSH8</accession>
<accession>A0A7H2C7A7</accession>
<organism>
    <name type="scientific">Escherichia coli (strain K12)</name>
    <dbReference type="NCBI Taxonomy" id="83333"/>
    <lineage>
        <taxon>Bacteria</taxon>
        <taxon>Pseudomonadati</taxon>
        <taxon>Pseudomonadota</taxon>
        <taxon>Gammaproteobacteria</taxon>
        <taxon>Enterobacterales</taxon>
        <taxon>Enterobacteriaceae</taxon>
        <taxon>Escherichia</taxon>
    </lineage>
</organism>